<gene>
    <name evidence="1" type="primary">tsf</name>
    <name type="ordered locus">ECDH10B_0150</name>
</gene>
<accession>B1XD39</accession>
<evidence type="ECO:0000255" key="1">
    <source>
        <dbReference type="HAMAP-Rule" id="MF_00050"/>
    </source>
</evidence>
<keyword id="KW-0963">Cytoplasm</keyword>
<keyword id="KW-0251">Elongation factor</keyword>
<keyword id="KW-0648">Protein biosynthesis</keyword>
<protein>
    <recommendedName>
        <fullName evidence="1">Elongation factor Ts</fullName>
        <shortName evidence="1">EF-Ts</shortName>
    </recommendedName>
</protein>
<sequence length="283" mass="30423">MAEITASLVKELRERTGAGMMDCKKALTEANGDIELAIENMRKSGAIKAAKKAGNVAADGVIKTKIDGNYGIILEVNCQTDFVAKDAGFQAFADKVLDAAVAGKITDVEVLKAQFEEERVALVAKIGENINIRRVAALEGDVLGSYQHGARIGVLVAAKGADEELVKHIAMHVAASKPEFIKPEDVSAEVVEKEYQVQLDIAMQSGKPKEIAEKMVEGRMKKFTGEVSLTGQPFVMEPSKTVGQLLKEHNAEVTGFIRFEVGEGIEKVETDFAAEVAAMSKQS</sequence>
<name>EFTS_ECODH</name>
<reference key="1">
    <citation type="journal article" date="2008" name="J. Bacteriol.">
        <title>The complete genome sequence of Escherichia coli DH10B: insights into the biology of a laboratory workhorse.</title>
        <authorList>
            <person name="Durfee T."/>
            <person name="Nelson R."/>
            <person name="Baldwin S."/>
            <person name="Plunkett G. III"/>
            <person name="Burland V."/>
            <person name="Mau B."/>
            <person name="Petrosino J.F."/>
            <person name="Qin X."/>
            <person name="Muzny D.M."/>
            <person name="Ayele M."/>
            <person name="Gibbs R.A."/>
            <person name="Csorgo B."/>
            <person name="Posfai G."/>
            <person name="Weinstock G.M."/>
            <person name="Blattner F.R."/>
        </authorList>
    </citation>
    <scope>NUCLEOTIDE SEQUENCE [LARGE SCALE GENOMIC DNA]</scope>
    <source>
        <strain>K12 / DH10B</strain>
    </source>
</reference>
<dbReference type="EMBL" id="CP000948">
    <property type="protein sequence ID" value="ACB01348.1"/>
    <property type="molecule type" value="Genomic_DNA"/>
</dbReference>
<dbReference type="RefSeq" id="WP_000818114.1">
    <property type="nucleotide sequence ID" value="NC_010473.1"/>
</dbReference>
<dbReference type="SMR" id="B1XD39"/>
<dbReference type="GeneID" id="93777255"/>
<dbReference type="KEGG" id="ecd:ECDH10B_0150"/>
<dbReference type="HOGENOM" id="CLU_047155_0_2_6"/>
<dbReference type="GO" id="GO:0005737">
    <property type="term" value="C:cytoplasm"/>
    <property type="evidence" value="ECO:0007669"/>
    <property type="project" value="UniProtKB-SubCell"/>
</dbReference>
<dbReference type="GO" id="GO:0003746">
    <property type="term" value="F:translation elongation factor activity"/>
    <property type="evidence" value="ECO:0007669"/>
    <property type="project" value="UniProtKB-UniRule"/>
</dbReference>
<dbReference type="CDD" id="cd14275">
    <property type="entry name" value="UBA_EF-Ts"/>
    <property type="match status" value="1"/>
</dbReference>
<dbReference type="FunFam" id="1.10.286.20:FF:000001">
    <property type="entry name" value="Elongation factor Ts"/>
    <property type="match status" value="1"/>
</dbReference>
<dbReference type="FunFam" id="1.10.8.10:FF:000001">
    <property type="entry name" value="Elongation factor Ts"/>
    <property type="match status" value="1"/>
</dbReference>
<dbReference type="FunFam" id="3.30.479.20:FF:000001">
    <property type="entry name" value="Elongation factor Ts"/>
    <property type="match status" value="1"/>
</dbReference>
<dbReference type="Gene3D" id="1.10.286.20">
    <property type="match status" value="1"/>
</dbReference>
<dbReference type="Gene3D" id="1.10.8.10">
    <property type="entry name" value="DNA helicase RuvA subunit, C-terminal domain"/>
    <property type="match status" value="1"/>
</dbReference>
<dbReference type="Gene3D" id="3.30.479.20">
    <property type="entry name" value="Elongation factor Ts, dimerisation domain"/>
    <property type="match status" value="2"/>
</dbReference>
<dbReference type="HAMAP" id="MF_00050">
    <property type="entry name" value="EF_Ts"/>
    <property type="match status" value="1"/>
</dbReference>
<dbReference type="InterPro" id="IPR036402">
    <property type="entry name" value="EF-Ts_dimer_sf"/>
</dbReference>
<dbReference type="InterPro" id="IPR001816">
    <property type="entry name" value="Transl_elong_EFTs/EF1B"/>
</dbReference>
<dbReference type="InterPro" id="IPR014039">
    <property type="entry name" value="Transl_elong_EFTs/EF1B_dimer"/>
</dbReference>
<dbReference type="InterPro" id="IPR018101">
    <property type="entry name" value="Transl_elong_Ts_CS"/>
</dbReference>
<dbReference type="InterPro" id="IPR009060">
    <property type="entry name" value="UBA-like_sf"/>
</dbReference>
<dbReference type="NCBIfam" id="TIGR00116">
    <property type="entry name" value="tsf"/>
    <property type="match status" value="1"/>
</dbReference>
<dbReference type="PANTHER" id="PTHR11741">
    <property type="entry name" value="ELONGATION FACTOR TS"/>
    <property type="match status" value="1"/>
</dbReference>
<dbReference type="PANTHER" id="PTHR11741:SF0">
    <property type="entry name" value="ELONGATION FACTOR TS, MITOCHONDRIAL"/>
    <property type="match status" value="1"/>
</dbReference>
<dbReference type="Pfam" id="PF00889">
    <property type="entry name" value="EF_TS"/>
    <property type="match status" value="1"/>
</dbReference>
<dbReference type="SUPFAM" id="SSF54713">
    <property type="entry name" value="Elongation factor Ts (EF-Ts), dimerisation domain"/>
    <property type="match status" value="2"/>
</dbReference>
<dbReference type="SUPFAM" id="SSF46934">
    <property type="entry name" value="UBA-like"/>
    <property type="match status" value="1"/>
</dbReference>
<dbReference type="PROSITE" id="PS01126">
    <property type="entry name" value="EF_TS_1"/>
    <property type="match status" value="1"/>
</dbReference>
<dbReference type="PROSITE" id="PS01127">
    <property type="entry name" value="EF_TS_2"/>
    <property type="match status" value="1"/>
</dbReference>
<proteinExistence type="inferred from homology"/>
<organism>
    <name type="scientific">Escherichia coli (strain K12 / DH10B)</name>
    <dbReference type="NCBI Taxonomy" id="316385"/>
    <lineage>
        <taxon>Bacteria</taxon>
        <taxon>Pseudomonadati</taxon>
        <taxon>Pseudomonadota</taxon>
        <taxon>Gammaproteobacteria</taxon>
        <taxon>Enterobacterales</taxon>
        <taxon>Enterobacteriaceae</taxon>
        <taxon>Escherichia</taxon>
    </lineage>
</organism>
<comment type="function">
    <text evidence="1">Associates with the EF-Tu.GDP complex and induces the exchange of GDP to GTP. It remains bound to the aminoacyl-tRNA.EF-Tu.GTP complex up to the GTP hydrolysis stage on the ribosome.</text>
</comment>
<comment type="subcellular location">
    <subcellularLocation>
        <location evidence="1">Cytoplasm</location>
    </subcellularLocation>
</comment>
<comment type="similarity">
    <text evidence="1">Belongs to the EF-Ts family.</text>
</comment>
<feature type="chain" id="PRO_1000116732" description="Elongation factor Ts">
    <location>
        <begin position="1"/>
        <end position="283"/>
    </location>
</feature>
<feature type="region of interest" description="Involved in Mg(2+) ion dislocation from EF-Tu" evidence="1">
    <location>
        <begin position="80"/>
        <end position="83"/>
    </location>
</feature>